<gene>
    <name evidence="1" type="primary">apt</name>
    <name type="ordered locus">CPE1939</name>
</gene>
<organism>
    <name type="scientific">Clostridium perfringens (strain 13 / Type A)</name>
    <dbReference type="NCBI Taxonomy" id="195102"/>
    <lineage>
        <taxon>Bacteria</taxon>
        <taxon>Bacillati</taxon>
        <taxon>Bacillota</taxon>
        <taxon>Clostridia</taxon>
        <taxon>Eubacteriales</taxon>
        <taxon>Clostridiaceae</taxon>
        <taxon>Clostridium</taxon>
    </lineage>
</organism>
<proteinExistence type="inferred from homology"/>
<keyword id="KW-0963">Cytoplasm</keyword>
<keyword id="KW-0328">Glycosyltransferase</keyword>
<keyword id="KW-0660">Purine salvage</keyword>
<keyword id="KW-1185">Reference proteome</keyword>
<keyword id="KW-0808">Transferase</keyword>
<comment type="function">
    <text evidence="1">Catalyzes a salvage reaction resulting in the formation of AMP, that is energically less costly than de novo synthesis.</text>
</comment>
<comment type="catalytic activity">
    <reaction evidence="1">
        <text>AMP + diphosphate = 5-phospho-alpha-D-ribose 1-diphosphate + adenine</text>
        <dbReference type="Rhea" id="RHEA:16609"/>
        <dbReference type="ChEBI" id="CHEBI:16708"/>
        <dbReference type="ChEBI" id="CHEBI:33019"/>
        <dbReference type="ChEBI" id="CHEBI:58017"/>
        <dbReference type="ChEBI" id="CHEBI:456215"/>
        <dbReference type="EC" id="2.4.2.7"/>
    </reaction>
</comment>
<comment type="pathway">
    <text evidence="1">Purine metabolism; AMP biosynthesis via salvage pathway; AMP from adenine: step 1/1.</text>
</comment>
<comment type="subunit">
    <text evidence="1">Homodimer.</text>
</comment>
<comment type="subcellular location">
    <subcellularLocation>
        <location evidence="1">Cytoplasm</location>
    </subcellularLocation>
</comment>
<comment type="similarity">
    <text evidence="1">Belongs to the purine/pyrimidine phosphoribosyltransferase family.</text>
</comment>
<evidence type="ECO:0000255" key="1">
    <source>
        <dbReference type="HAMAP-Rule" id="MF_00004"/>
    </source>
</evidence>
<accession>Q8XJ22</accession>
<sequence length="172" mass="18602">MSLKDKIRVIEDFPKKGISFKDITTLIADGEGLRDSVDQMAEFFKDKNIDVVVGPEARGFIFGVPVAYALGVGFIPVRKPGKLPGDTVRVEYDLEYGKDALEIHKDAIKPGMRVAIVDDLLATGGTIAAVAKLVEQAGGEVAGLAFTIELTELKGRDKLKGYEVTSLVDYDV</sequence>
<dbReference type="EC" id="2.4.2.7" evidence="1"/>
<dbReference type="EMBL" id="BA000016">
    <property type="protein sequence ID" value="BAB81645.1"/>
    <property type="molecule type" value="Genomic_DNA"/>
</dbReference>
<dbReference type="RefSeq" id="WP_003451591.1">
    <property type="nucleotide sequence ID" value="NC_003366.1"/>
</dbReference>
<dbReference type="SMR" id="Q8XJ22"/>
<dbReference type="STRING" id="195102.gene:10491208"/>
<dbReference type="KEGG" id="cpe:CPE1939"/>
<dbReference type="HOGENOM" id="CLU_063339_3_0_9"/>
<dbReference type="UniPathway" id="UPA00588">
    <property type="reaction ID" value="UER00646"/>
</dbReference>
<dbReference type="Proteomes" id="UP000000818">
    <property type="component" value="Chromosome"/>
</dbReference>
<dbReference type="GO" id="GO:0005737">
    <property type="term" value="C:cytoplasm"/>
    <property type="evidence" value="ECO:0007669"/>
    <property type="project" value="UniProtKB-SubCell"/>
</dbReference>
<dbReference type="GO" id="GO:0003999">
    <property type="term" value="F:adenine phosphoribosyltransferase activity"/>
    <property type="evidence" value="ECO:0007669"/>
    <property type="project" value="UniProtKB-UniRule"/>
</dbReference>
<dbReference type="GO" id="GO:0006168">
    <property type="term" value="P:adenine salvage"/>
    <property type="evidence" value="ECO:0007669"/>
    <property type="project" value="InterPro"/>
</dbReference>
<dbReference type="GO" id="GO:0044209">
    <property type="term" value="P:AMP salvage"/>
    <property type="evidence" value="ECO:0007669"/>
    <property type="project" value="UniProtKB-UniRule"/>
</dbReference>
<dbReference type="GO" id="GO:0006166">
    <property type="term" value="P:purine ribonucleoside salvage"/>
    <property type="evidence" value="ECO:0007669"/>
    <property type="project" value="UniProtKB-KW"/>
</dbReference>
<dbReference type="CDD" id="cd06223">
    <property type="entry name" value="PRTases_typeI"/>
    <property type="match status" value="1"/>
</dbReference>
<dbReference type="FunFam" id="3.40.50.2020:FF:000004">
    <property type="entry name" value="Adenine phosphoribosyltransferase"/>
    <property type="match status" value="1"/>
</dbReference>
<dbReference type="Gene3D" id="3.40.50.2020">
    <property type="match status" value="1"/>
</dbReference>
<dbReference type="HAMAP" id="MF_00004">
    <property type="entry name" value="Aden_phosphoribosyltr"/>
    <property type="match status" value="1"/>
</dbReference>
<dbReference type="InterPro" id="IPR005764">
    <property type="entry name" value="Ade_phspho_trans"/>
</dbReference>
<dbReference type="InterPro" id="IPR050120">
    <property type="entry name" value="Adenine_PRTase"/>
</dbReference>
<dbReference type="InterPro" id="IPR000836">
    <property type="entry name" value="PRibTrfase_dom"/>
</dbReference>
<dbReference type="InterPro" id="IPR029057">
    <property type="entry name" value="PRTase-like"/>
</dbReference>
<dbReference type="NCBIfam" id="TIGR01090">
    <property type="entry name" value="apt"/>
    <property type="match status" value="1"/>
</dbReference>
<dbReference type="NCBIfam" id="NF002633">
    <property type="entry name" value="PRK02304.1-2"/>
    <property type="match status" value="1"/>
</dbReference>
<dbReference type="NCBIfam" id="NF002634">
    <property type="entry name" value="PRK02304.1-3"/>
    <property type="match status" value="1"/>
</dbReference>
<dbReference type="NCBIfam" id="NF002636">
    <property type="entry name" value="PRK02304.1-5"/>
    <property type="match status" value="1"/>
</dbReference>
<dbReference type="PANTHER" id="PTHR11776">
    <property type="entry name" value="ADENINE PHOSPHORIBOSYLTRANSFERASE"/>
    <property type="match status" value="1"/>
</dbReference>
<dbReference type="PANTHER" id="PTHR11776:SF7">
    <property type="entry name" value="PHOSPHORIBOSYLTRANSFERASE DOMAIN-CONTAINING PROTEIN"/>
    <property type="match status" value="1"/>
</dbReference>
<dbReference type="Pfam" id="PF00156">
    <property type="entry name" value="Pribosyltran"/>
    <property type="match status" value="1"/>
</dbReference>
<dbReference type="SUPFAM" id="SSF53271">
    <property type="entry name" value="PRTase-like"/>
    <property type="match status" value="1"/>
</dbReference>
<feature type="chain" id="PRO_0000149374" description="Adenine phosphoribosyltransferase">
    <location>
        <begin position="1"/>
        <end position="172"/>
    </location>
</feature>
<protein>
    <recommendedName>
        <fullName evidence="1">Adenine phosphoribosyltransferase</fullName>
        <shortName evidence="1">APRT</shortName>
        <ecNumber evidence="1">2.4.2.7</ecNumber>
    </recommendedName>
</protein>
<reference key="1">
    <citation type="journal article" date="2002" name="Proc. Natl. Acad. Sci. U.S.A.">
        <title>Complete genome sequence of Clostridium perfringens, an anaerobic flesh-eater.</title>
        <authorList>
            <person name="Shimizu T."/>
            <person name="Ohtani K."/>
            <person name="Hirakawa H."/>
            <person name="Ohshima K."/>
            <person name="Yamashita A."/>
            <person name="Shiba T."/>
            <person name="Ogasawara N."/>
            <person name="Hattori M."/>
            <person name="Kuhara S."/>
            <person name="Hayashi H."/>
        </authorList>
    </citation>
    <scope>NUCLEOTIDE SEQUENCE [LARGE SCALE GENOMIC DNA]</scope>
    <source>
        <strain>13 / Type A</strain>
    </source>
</reference>
<name>APT_CLOPE</name>